<gene>
    <name type="primary">Hsd17b10</name>
    <name type="synonym">Erab</name>
    <name type="synonym">Hadh2</name>
</gene>
<comment type="function">
    <text evidence="2">Mitochondrial dehydrogenase involved in pathways of fatty acid, branched-chain amino acid and steroid metabolism. Acts as (S)-3-hydroxyacyl-CoA dehydrogenase in mitochondrial fatty acid beta-oxidation, a major degradation pathway of fatty acids. Catalyzes the third step in the beta-oxidation cycle, namely the reversible conversion of (S)-3-hydroxyacyl-CoA to 3-ketoacyl-CoA. Preferentially accepts straight medium- and short-chain acyl-CoA substrates with highest efficiency for (3S)-hydroxybutanoyl-CoA. Acts as 3-hydroxy-2-methylbutyryl-CoA dehydrogenase in branched-chain amino acid catabolic pathway. Catalyzes the oxidation of 3-hydroxy-2-methylbutanoyl-CoA into 2-methyl-3-oxobutanoyl-CoA, a step in isoleucine degradation pathway. Has hydroxysteroid dehydrogenase activity toward steroid hormones and bile acids. Catalyzes the oxidation of 3alpha-, 17beta-, 20beta- and 21-hydroxysteroids and 7alpha- and 7beta-hydroxy bile acids. Oxidizes allopregnanolone/brexanolone at the 3alpha-hydroxyl group, which is known to be critical for the activation of gamma-aminobutyric acid receptors (GABAARs) chloride channel. Has phospholipase C-like activity toward cardiolipin and its oxidized species. Likely oxidizes the 2'-hydroxyl in the head group of cardiolipin to form a ketone intermediate that undergoes nucleophilic attack by water and fragments into diacylglycerol, dihydroxyacetone and orthophosphate. Has higher affinity for cardiolipin with oxidized fatty acids and may degrade these species during the oxidative stress response to protect cells from apoptosis. By interacting with intracellular amyloid-beta, it may contribute to the neuronal dysfunction associated with Alzheimer disease (AD). Essential for structural and functional integrity of mitochondria.</text>
</comment>
<comment type="function">
    <text evidence="2">In addition to mitochondrial dehydrogenase activity, moonlights as a component of mitochondrial ribonuclease P, a complex that cleaves tRNA molecules in their 5'-ends. Together with TRMT10C/MRPP1, forms a subcomplex of the mitochondrial ribonuclease P, named MRPP1-MRPP2 subcomplex, which displays functions that are independent of the ribonuclease P activity. The MRPP1-MRPP2 subcomplex catalyzes the formation of N(1)-methylguanine and N(1)-methyladenine at position 9 (m1G9 and m1A9, respectively) in tRNAs; HSD17B10/MRPP2 acting as a non-catalytic subunit. The MRPP1-MRPP2 subcomplex also acts as a tRNA maturation platform: following 5'-end cleavage by the mitochondrial ribonuclease P complex, the MRPP1-MRPP2 subcomplex enhances the efficiency of 3'-processing catalyzed by ELAC2, retains the tRNA product after ELAC2 processing and presents the nascent tRNA to the mitochondrial CCA tRNA nucleotidyltransferase TRNT1 enzyme. Associates with mitochondrial DNA complexes at the nucleoids to initiate RNA processing and ribosome assembly.</text>
</comment>
<comment type="catalytic activity">
    <reaction evidence="2">
        <text>a (3S)-3-hydroxyacyl-CoA + NAD(+) = a 3-oxoacyl-CoA + NADH + H(+)</text>
        <dbReference type="Rhea" id="RHEA:22432"/>
        <dbReference type="ChEBI" id="CHEBI:15378"/>
        <dbReference type="ChEBI" id="CHEBI:57318"/>
        <dbReference type="ChEBI" id="CHEBI:57540"/>
        <dbReference type="ChEBI" id="CHEBI:57945"/>
        <dbReference type="ChEBI" id="CHEBI:90726"/>
        <dbReference type="EC" id="1.1.1.35"/>
    </reaction>
    <physiologicalReaction direction="left-to-right" evidence="2">
        <dbReference type="Rhea" id="RHEA:22433"/>
    </physiologicalReaction>
    <physiologicalReaction direction="right-to-left" evidence="2">
        <dbReference type="Rhea" id="RHEA:22434"/>
    </physiologicalReaction>
</comment>
<comment type="catalytic activity">
    <reaction evidence="2">
        <text>(2S,3S)-3-hydroxy-2-methylbutanoyl-CoA + NAD(+) = 2-methyl-3-oxobutanoyl-CoA + NADH + H(+)</text>
        <dbReference type="Rhea" id="RHEA:13281"/>
        <dbReference type="ChEBI" id="CHEBI:15378"/>
        <dbReference type="ChEBI" id="CHEBI:57312"/>
        <dbReference type="ChEBI" id="CHEBI:57335"/>
        <dbReference type="ChEBI" id="CHEBI:57540"/>
        <dbReference type="ChEBI" id="CHEBI:57945"/>
        <dbReference type="EC" id="1.1.1.178"/>
    </reaction>
    <physiologicalReaction direction="left-to-right" evidence="2">
        <dbReference type="Rhea" id="RHEA:13282"/>
    </physiologicalReaction>
</comment>
<comment type="catalytic activity">
    <reaction evidence="2">
        <text>testosterone + NAD(+) = androst-4-ene-3,17-dione + NADH + H(+)</text>
        <dbReference type="Rhea" id="RHEA:14929"/>
        <dbReference type="ChEBI" id="CHEBI:15378"/>
        <dbReference type="ChEBI" id="CHEBI:16422"/>
        <dbReference type="ChEBI" id="CHEBI:17347"/>
        <dbReference type="ChEBI" id="CHEBI:57540"/>
        <dbReference type="ChEBI" id="CHEBI:57945"/>
        <dbReference type="EC" id="1.1.1.239"/>
    </reaction>
    <physiologicalReaction direction="left-to-right" evidence="2">
        <dbReference type="Rhea" id="RHEA:14930"/>
    </physiologicalReaction>
</comment>
<comment type="catalytic activity">
    <reaction evidence="2">
        <text>5alpha-androstane-3alpha,17beta-diol + NAD(+) = 17beta-hydroxy-5alpha-androstan-3-one + NADH + H(+)</text>
        <dbReference type="Rhea" id="RHEA:42004"/>
        <dbReference type="ChEBI" id="CHEBI:15378"/>
        <dbReference type="ChEBI" id="CHEBI:16330"/>
        <dbReference type="ChEBI" id="CHEBI:36713"/>
        <dbReference type="ChEBI" id="CHEBI:57540"/>
        <dbReference type="ChEBI" id="CHEBI:57945"/>
        <dbReference type="EC" id="1.1.1.53"/>
    </reaction>
    <physiologicalReaction direction="right-to-left" evidence="2">
        <dbReference type="Rhea" id="RHEA:42006"/>
    </physiologicalReaction>
</comment>
<comment type="catalytic activity">
    <reaction evidence="2">
        <text>17beta-estradiol + NAD(+) = estrone + NADH + H(+)</text>
        <dbReference type="Rhea" id="RHEA:24612"/>
        <dbReference type="ChEBI" id="CHEBI:15378"/>
        <dbReference type="ChEBI" id="CHEBI:16469"/>
        <dbReference type="ChEBI" id="CHEBI:17263"/>
        <dbReference type="ChEBI" id="CHEBI:57540"/>
        <dbReference type="ChEBI" id="CHEBI:57945"/>
        <dbReference type="EC" id="1.1.1.62"/>
    </reaction>
    <physiologicalReaction direction="left-to-right" evidence="2">
        <dbReference type="Rhea" id="RHEA:24613"/>
    </physiologicalReaction>
</comment>
<comment type="catalytic activity">
    <reaction evidence="2">
        <text>cholate + NAD(+) = 3alpha,12alpha-dihydroxy-7-oxo-5beta-cholanate + NADH + H(+)</text>
        <dbReference type="Rhea" id="RHEA:19409"/>
        <dbReference type="ChEBI" id="CHEBI:11893"/>
        <dbReference type="ChEBI" id="CHEBI:15378"/>
        <dbReference type="ChEBI" id="CHEBI:29747"/>
        <dbReference type="ChEBI" id="CHEBI:57540"/>
        <dbReference type="ChEBI" id="CHEBI:57945"/>
        <dbReference type="EC" id="1.1.1.159"/>
    </reaction>
    <physiologicalReaction direction="left-to-right" evidence="2">
        <dbReference type="Rhea" id="RHEA:19410"/>
    </physiologicalReaction>
</comment>
<comment type="catalytic activity">
    <reaction evidence="2">
        <text>(3S)-3-hydroxybutanoyl-CoA + NAD(+) = acetoacetyl-CoA + NADH + H(+)</text>
        <dbReference type="Rhea" id="RHEA:30799"/>
        <dbReference type="ChEBI" id="CHEBI:15378"/>
        <dbReference type="ChEBI" id="CHEBI:57286"/>
        <dbReference type="ChEBI" id="CHEBI:57316"/>
        <dbReference type="ChEBI" id="CHEBI:57540"/>
        <dbReference type="ChEBI" id="CHEBI:57945"/>
    </reaction>
    <physiologicalReaction direction="left-to-right" evidence="2">
        <dbReference type="Rhea" id="RHEA:30800"/>
    </physiologicalReaction>
    <physiologicalReaction direction="right-to-left" evidence="2">
        <dbReference type="Rhea" id="RHEA:30801"/>
    </physiologicalReaction>
</comment>
<comment type="catalytic activity">
    <reaction evidence="2">
        <text>(3S)-hydroxyoctanoyl-CoA + NAD(+) = 3-oxooctanoyl-CoA + NADH + H(+)</text>
        <dbReference type="Rhea" id="RHEA:31195"/>
        <dbReference type="ChEBI" id="CHEBI:15378"/>
        <dbReference type="ChEBI" id="CHEBI:57540"/>
        <dbReference type="ChEBI" id="CHEBI:57945"/>
        <dbReference type="ChEBI" id="CHEBI:62617"/>
        <dbReference type="ChEBI" id="CHEBI:62619"/>
    </reaction>
    <physiologicalReaction direction="left-to-right" evidence="2">
        <dbReference type="Rhea" id="RHEA:31196"/>
    </physiologicalReaction>
    <physiologicalReaction direction="right-to-left" evidence="2">
        <dbReference type="Rhea" id="RHEA:31197"/>
    </physiologicalReaction>
</comment>
<comment type="catalytic activity">
    <reaction evidence="2">
        <text>(3S)-hydroxyhexadecanoyl-CoA + NAD(+) = 3-oxohexadecanoyl-CoA + NADH + H(+)</text>
        <dbReference type="Rhea" id="RHEA:31159"/>
        <dbReference type="ChEBI" id="CHEBI:15378"/>
        <dbReference type="ChEBI" id="CHEBI:57349"/>
        <dbReference type="ChEBI" id="CHEBI:57540"/>
        <dbReference type="ChEBI" id="CHEBI:57945"/>
        <dbReference type="ChEBI" id="CHEBI:62613"/>
    </reaction>
    <physiologicalReaction direction="left-to-right" evidence="2">
        <dbReference type="Rhea" id="RHEA:31160"/>
    </physiologicalReaction>
    <physiologicalReaction direction="right-to-left" evidence="2">
        <dbReference type="Rhea" id="RHEA:31161"/>
    </physiologicalReaction>
</comment>
<comment type="catalytic activity">
    <reaction evidence="2">
        <text>17beta-hydroxy-5alpha-androstan-3-one + NAD(+) = 5alpha-androstan-3,17-dione + NADH + H(+)</text>
        <dbReference type="Rhea" id="RHEA:41992"/>
        <dbReference type="ChEBI" id="CHEBI:15378"/>
        <dbReference type="ChEBI" id="CHEBI:15994"/>
        <dbReference type="ChEBI" id="CHEBI:16330"/>
        <dbReference type="ChEBI" id="CHEBI:57540"/>
        <dbReference type="ChEBI" id="CHEBI:57945"/>
    </reaction>
    <physiologicalReaction direction="left-to-right" evidence="2">
        <dbReference type="Rhea" id="RHEA:41993"/>
    </physiologicalReaction>
</comment>
<comment type="catalytic activity">
    <reaction evidence="2">
        <text>5alpha-pregnan-20beta-ol-3-one + NAD(+) = 5alpha-pregnane-3,20-dione + NADH + H(+)</text>
        <dbReference type="Rhea" id="RHEA:42008"/>
        <dbReference type="ChEBI" id="CHEBI:15378"/>
        <dbReference type="ChEBI" id="CHEBI:28952"/>
        <dbReference type="ChEBI" id="CHEBI:57540"/>
        <dbReference type="ChEBI" id="CHEBI:57945"/>
        <dbReference type="ChEBI" id="CHEBI:78594"/>
    </reaction>
    <physiologicalReaction direction="left-to-right" evidence="2">
        <dbReference type="Rhea" id="RHEA:42009"/>
    </physiologicalReaction>
</comment>
<comment type="catalytic activity">
    <reaction evidence="2">
        <text>3alpha-hydroxy-5alpha-pregnan-20-one + NAD(+) = 5alpha-pregnane-3,20-dione + NADH + H(+)</text>
        <dbReference type="Rhea" id="RHEA:41980"/>
        <dbReference type="ChEBI" id="CHEBI:15378"/>
        <dbReference type="ChEBI" id="CHEBI:28952"/>
        <dbReference type="ChEBI" id="CHEBI:50169"/>
        <dbReference type="ChEBI" id="CHEBI:57540"/>
        <dbReference type="ChEBI" id="CHEBI:57945"/>
    </reaction>
    <physiologicalReaction direction="left-to-right" evidence="2">
        <dbReference type="Rhea" id="RHEA:41981"/>
    </physiologicalReaction>
</comment>
<comment type="catalytic activity">
    <reaction evidence="2">
        <text>cortisone + NAD(+) = 17alpha-hydroxypregn-4-en-3,11,20-trione-21-al + NADH + H(+)</text>
        <dbReference type="Rhea" id="RHEA:42016"/>
        <dbReference type="ChEBI" id="CHEBI:15378"/>
        <dbReference type="ChEBI" id="CHEBI:16962"/>
        <dbReference type="ChEBI" id="CHEBI:57540"/>
        <dbReference type="ChEBI" id="CHEBI:57945"/>
        <dbReference type="ChEBI" id="CHEBI:78596"/>
    </reaction>
    <physiologicalReaction direction="left-to-right" evidence="2">
        <dbReference type="Rhea" id="RHEA:42017"/>
    </physiologicalReaction>
</comment>
<comment type="catalytic activity">
    <reaction evidence="2">
        <text>11-dehydrocorticosterone + NAD(+) = pregn-4-ene-3,11,20,21-tetraone + NADH + H(+)</text>
        <dbReference type="Rhea" id="RHEA:42020"/>
        <dbReference type="ChEBI" id="CHEBI:15378"/>
        <dbReference type="ChEBI" id="CHEBI:57540"/>
        <dbReference type="ChEBI" id="CHEBI:57945"/>
        <dbReference type="ChEBI" id="CHEBI:78600"/>
        <dbReference type="ChEBI" id="CHEBI:78601"/>
    </reaction>
    <physiologicalReaction direction="left-to-right" evidence="2">
        <dbReference type="Rhea" id="RHEA:42021"/>
    </physiologicalReaction>
</comment>
<comment type="catalytic activity">
    <reaction evidence="2">
        <text>cortisol + NAD(+) = 11beta,17alpha-dihydroxypregn-4-ene-3,20,21-trione + NADH + H(+)</text>
        <dbReference type="Rhea" id="RHEA:42012"/>
        <dbReference type="ChEBI" id="CHEBI:15378"/>
        <dbReference type="ChEBI" id="CHEBI:17650"/>
        <dbReference type="ChEBI" id="CHEBI:57540"/>
        <dbReference type="ChEBI" id="CHEBI:57945"/>
        <dbReference type="ChEBI" id="CHEBI:78595"/>
    </reaction>
    <physiologicalReaction direction="left-to-right" evidence="2">
        <dbReference type="Rhea" id="RHEA:42013"/>
    </physiologicalReaction>
</comment>
<comment type="catalytic activity">
    <reaction evidence="2">
        <text>chenodeoxycholate + NAD(+) = 7-oxolithocholate + NADH + H(+)</text>
        <dbReference type="Rhea" id="RHEA:42036"/>
        <dbReference type="ChEBI" id="CHEBI:15378"/>
        <dbReference type="ChEBI" id="CHEBI:36234"/>
        <dbReference type="ChEBI" id="CHEBI:57540"/>
        <dbReference type="ChEBI" id="CHEBI:57945"/>
        <dbReference type="ChEBI" id="CHEBI:78605"/>
    </reaction>
    <physiologicalReaction direction="left-to-right" evidence="2">
        <dbReference type="Rhea" id="RHEA:42037"/>
    </physiologicalReaction>
</comment>
<comment type="catalytic activity">
    <reaction evidence="2">
        <text>ursodeoxycholate + NAD(+) = 7-oxolithocholate + NADH + H(+)</text>
        <dbReference type="Rhea" id="RHEA:42028"/>
        <dbReference type="ChEBI" id="CHEBI:15378"/>
        <dbReference type="ChEBI" id="CHEBI:57540"/>
        <dbReference type="ChEBI" id="CHEBI:57945"/>
        <dbReference type="ChEBI" id="CHEBI:78604"/>
        <dbReference type="ChEBI" id="CHEBI:78605"/>
    </reaction>
    <physiologicalReaction direction="left-to-right" evidence="2">
        <dbReference type="Rhea" id="RHEA:42029"/>
    </physiologicalReaction>
</comment>
<comment type="catalytic activity">
    <reaction evidence="2">
        <text>3beta,7beta-dihydroxy-5beta-cholan-24-oate + NAD(+) = 3beta-hydroxy-7-oxo-5beta-cholan-24-oate + NADH + H(+)</text>
        <dbReference type="Rhea" id="RHEA:42024"/>
        <dbReference type="ChEBI" id="CHEBI:15378"/>
        <dbReference type="ChEBI" id="CHEBI:57540"/>
        <dbReference type="ChEBI" id="CHEBI:57945"/>
        <dbReference type="ChEBI" id="CHEBI:78602"/>
        <dbReference type="ChEBI" id="CHEBI:78603"/>
    </reaction>
    <physiologicalReaction direction="left-to-right" evidence="2">
        <dbReference type="Rhea" id="RHEA:42025"/>
    </physiologicalReaction>
</comment>
<comment type="pathway">
    <text evidence="2">Amino-acid degradation; L-isoleucine degradation.</text>
</comment>
<comment type="pathway">
    <text evidence="2">Lipid metabolism; fatty acid beta-oxidation.</text>
</comment>
<comment type="pathway">
    <text evidence="2">Steroid metabolism.</text>
</comment>
<comment type="pathway">
    <text evidence="2">Lipid metabolism; bile acid biosynthesis.</text>
</comment>
<comment type="subunit">
    <text evidence="2">Homotetramer. Component of mitochondrial ribonuclease P, a complex composed of TRMT10C/MRPP1, HSD17B10/MRPP2 and PRORP/MRPP3. Interacts with TRMT10C/MRPP1; forming the MRPP1-MRPP2 subcomplex of the mitochondrial ribonuclease P complex.</text>
</comment>
<comment type="subcellular location">
    <subcellularLocation>
        <location evidence="2">Mitochondrion</location>
    </subcellularLocation>
    <subcellularLocation>
        <location evidence="2">Mitochondrion matrix</location>
        <location evidence="2">Mitochondrion nucleoid</location>
    </subcellularLocation>
</comment>
<comment type="similarity">
    <text evidence="4">Belongs to the short-chain dehydrogenases/reductases (SDR) family.</text>
</comment>
<feature type="initiator methionine" description="Removed" evidence="2">
    <location>
        <position position="1"/>
    </location>
</feature>
<feature type="chain" id="PRO_0000054812" description="3-hydroxyacyl-CoA dehydrogenase type-2">
    <location>
        <begin position="2"/>
        <end position="261"/>
    </location>
</feature>
<feature type="active site" description="Proton acceptor" evidence="3">
    <location>
        <position position="168"/>
    </location>
</feature>
<feature type="binding site" evidence="2">
    <location>
        <position position="20"/>
    </location>
    <ligand>
        <name>NAD(+)</name>
        <dbReference type="ChEBI" id="CHEBI:57540"/>
    </ligand>
</feature>
<feature type="binding site" evidence="2">
    <location>
        <position position="22"/>
    </location>
    <ligand>
        <name>NAD(+)</name>
        <dbReference type="ChEBI" id="CHEBI:57540"/>
    </ligand>
</feature>
<feature type="binding site" evidence="2">
    <location>
        <position position="41"/>
    </location>
    <ligand>
        <name>NAD(+)</name>
        <dbReference type="ChEBI" id="CHEBI:57540"/>
    </ligand>
</feature>
<feature type="binding site" evidence="2">
    <location>
        <position position="65"/>
    </location>
    <ligand>
        <name>NAD(+)</name>
        <dbReference type="ChEBI" id="CHEBI:57540"/>
    </ligand>
</feature>
<feature type="binding site" evidence="2">
    <location>
        <position position="91"/>
    </location>
    <ligand>
        <name>NAD(+)</name>
        <dbReference type="ChEBI" id="CHEBI:57540"/>
    </ligand>
</feature>
<feature type="binding site" evidence="3">
    <location>
        <position position="155"/>
    </location>
    <ligand>
        <name>substrate</name>
    </ligand>
</feature>
<feature type="binding site" evidence="2">
    <location>
        <position position="168"/>
    </location>
    <ligand>
        <name>NAD(+)</name>
        <dbReference type="ChEBI" id="CHEBI:57540"/>
    </ligand>
</feature>
<feature type="binding site" evidence="2">
    <location>
        <position position="172"/>
    </location>
    <ligand>
        <name>NAD(+)</name>
        <dbReference type="ChEBI" id="CHEBI:57540"/>
    </ligand>
</feature>
<feature type="binding site" evidence="2">
    <location>
        <position position="201"/>
    </location>
    <ligand>
        <name>NAD(+)</name>
        <dbReference type="ChEBI" id="CHEBI:57540"/>
    </ligand>
</feature>
<feature type="binding site" evidence="2">
    <location>
        <position position="203"/>
    </location>
    <ligand>
        <name>NAD(+)</name>
        <dbReference type="ChEBI" id="CHEBI:57540"/>
    </ligand>
</feature>
<feature type="modified residue" description="N-acetylalanine" evidence="2">
    <location>
        <position position="2"/>
    </location>
</feature>
<feature type="modified residue" description="N6-acetyllysine; alternate" evidence="1">
    <location>
        <position position="53"/>
    </location>
</feature>
<feature type="modified residue" description="N6-succinyllysine; alternate" evidence="1">
    <location>
        <position position="53"/>
    </location>
</feature>
<feature type="modified residue" description="N6-acetyllysine" evidence="1">
    <location>
        <position position="69"/>
    </location>
</feature>
<feature type="modified residue" description="N6-acetyllysine" evidence="1">
    <location>
        <position position="99"/>
    </location>
</feature>
<feature type="modified residue" description="N6-acetyllysine" evidence="1">
    <location>
        <position position="105"/>
    </location>
</feature>
<feature type="modified residue" description="N6-acetyllysine; alternate" evidence="1">
    <location>
        <position position="212"/>
    </location>
</feature>
<feature type="modified residue" description="N6-succinyllysine; alternate" evidence="1">
    <location>
        <position position="212"/>
    </location>
</feature>
<feature type="sequence conflict" description="In Ref. 2; AAF14853." evidence="4" ref="2">
    <original>V</original>
    <variation>C</variation>
    <location>
        <position position="5"/>
    </location>
</feature>
<feature type="strand" evidence="5">
    <location>
        <begin position="12"/>
        <end position="16"/>
    </location>
</feature>
<feature type="turn" evidence="5">
    <location>
        <begin position="17"/>
        <end position="19"/>
    </location>
</feature>
<feature type="helix" evidence="5">
    <location>
        <begin position="21"/>
        <end position="32"/>
    </location>
</feature>
<feature type="strand" evidence="5">
    <location>
        <begin position="36"/>
        <end position="41"/>
    </location>
</feature>
<feature type="helix" evidence="5">
    <location>
        <begin position="47"/>
        <end position="54"/>
    </location>
</feature>
<feature type="strand" evidence="5">
    <location>
        <begin position="58"/>
        <end position="62"/>
    </location>
</feature>
<feature type="helix" evidence="5">
    <location>
        <begin position="68"/>
        <end position="82"/>
    </location>
</feature>
<feature type="strand" evidence="5">
    <location>
        <begin position="87"/>
        <end position="90"/>
    </location>
</feature>
<feature type="strand" evidence="5">
    <location>
        <begin position="100"/>
        <end position="102"/>
    </location>
</feature>
<feature type="turn" evidence="5">
    <location>
        <begin position="103"/>
        <end position="106"/>
    </location>
</feature>
<feature type="helix" evidence="5">
    <location>
        <begin position="111"/>
        <end position="121"/>
    </location>
</feature>
<feature type="helix" evidence="5">
    <location>
        <begin position="123"/>
        <end position="137"/>
    </location>
</feature>
<feature type="strand" evidence="5">
    <location>
        <begin position="148"/>
        <end position="153"/>
    </location>
</feature>
<feature type="helix" evidence="5">
    <location>
        <begin position="157"/>
        <end position="160"/>
    </location>
</feature>
<feature type="helix" evidence="5">
    <location>
        <begin position="166"/>
        <end position="186"/>
    </location>
</feature>
<feature type="helix" evidence="5">
    <location>
        <begin position="187"/>
        <end position="189"/>
    </location>
</feature>
<feature type="strand" evidence="5">
    <location>
        <begin position="191"/>
        <end position="198"/>
    </location>
</feature>
<feature type="strand" evidence="5">
    <location>
        <begin position="201"/>
        <end position="203"/>
    </location>
</feature>
<feature type="turn" evidence="5">
    <location>
        <begin position="204"/>
        <end position="206"/>
    </location>
</feature>
<feature type="helix" evidence="5">
    <location>
        <begin position="214"/>
        <end position="217"/>
    </location>
</feature>
<feature type="helix" evidence="5">
    <location>
        <begin position="218"/>
        <end position="220"/>
    </location>
</feature>
<feature type="strand" evidence="5">
    <location>
        <begin position="222"/>
        <end position="224"/>
    </location>
</feature>
<feature type="helix" evidence="5">
    <location>
        <begin position="230"/>
        <end position="242"/>
    </location>
</feature>
<feature type="strand" evidence="5">
    <location>
        <begin position="250"/>
        <end position="254"/>
    </location>
</feature>
<dbReference type="EC" id="1.1.1.35" evidence="2"/>
<dbReference type="EC" id="1.1.1.62" evidence="2"/>
<dbReference type="EC" id="1.1.1.239" evidence="2"/>
<dbReference type="EC" id="1.1.1.178" evidence="2"/>
<dbReference type="EC" id="1.1.1.53" evidence="2"/>
<dbReference type="EC" id="1.1.1.159" evidence="2"/>
<dbReference type="EMBL" id="AF049878">
    <property type="protein sequence ID" value="AAC05747.1"/>
    <property type="molecule type" value="mRNA"/>
</dbReference>
<dbReference type="EMBL" id="AF069770">
    <property type="protein sequence ID" value="AAF14853.1"/>
    <property type="molecule type" value="mRNA"/>
</dbReference>
<dbReference type="RefSeq" id="NP_113870.1">
    <property type="nucleotide sequence ID" value="NM_031682.1"/>
</dbReference>
<dbReference type="PDB" id="1E3S">
    <property type="method" value="X-ray"/>
    <property type="resolution" value="2.00 A"/>
    <property type="chains" value="A/B/C/D=2-261"/>
</dbReference>
<dbReference type="PDB" id="1E3W">
    <property type="method" value="X-ray"/>
    <property type="resolution" value="2.00 A"/>
    <property type="chains" value="A/B/C/D=2-261"/>
</dbReference>
<dbReference type="PDB" id="1E6W">
    <property type="method" value="X-ray"/>
    <property type="resolution" value="1.70 A"/>
    <property type="chains" value="A/B/C/D=2-261"/>
</dbReference>
<dbReference type="PDBsum" id="1E3S"/>
<dbReference type="PDBsum" id="1E3W"/>
<dbReference type="PDBsum" id="1E6W"/>
<dbReference type="SMR" id="O70351"/>
<dbReference type="BioGRID" id="248908">
    <property type="interactions" value="4"/>
</dbReference>
<dbReference type="FunCoup" id="O70351">
    <property type="interactions" value="929"/>
</dbReference>
<dbReference type="IntAct" id="O70351">
    <property type="interactions" value="2"/>
</dbReference>
<dbReference type="MINT" id="O70351"/>
<dbReference type="STRING" id="10116.ENSRNOP00000043608"/>
<dbReference type="GlyGen" id="O70351">
    <property type="glycosylation" value="1 site, 1 O-linked glycan (1 site)"/>
</dbReference>
<dbReference type="iPTMnet" id="O70351"/>
<dbReference type="PhosphoSitePlus" id="O70351"/>
<dbReference type="SwissPalm" id="O70351"/>
<dbReference type="jPOST" id="O70351"/>
<dbReference type="PaxDb" id="10116-ENSRNOP00000043608"/>
<dbReference type="GeneID" id="63864"/>
<dbReference type="KEGG" id="rno:63864"/>
<dbReference type="AGR" id="RGD:69231"/>
<dbReference type="CTD" id="3028"/>
<dbReference type="RGD" id="69231">
    <property type="gene designation" value="Hsd17b10"/>
</dbReference>
<dbReference type="eggNOG" id="KOG1199">
    <property type="taxonomic scope" value="Eukaryota"/>
</dbReference>
<dbReference type="InParanoid" id="O70351"/>
<dbReference type="OrthoDB" id="39733at9989"/>
<dbReference type="PhylomeDB" id="O70351"/>
<dbReference type="Reactome" id="R-RNO-70895">
    <property type="pathway name" value="Branched-chain amino acid catabolism"/>
</dbReference>
<dbReference type="Reactome" id="R-RNO-9837999">
    <property type="pathway name" value="Mitochondrial protein degradation"/>
</dbReference>
<dbReference type="SABIO-RK" id="O70351"/>
<dbReference type="UniPathway" id="UPA00221"/>
<dbReference type="UniPathway" id="UPA00364"/>
<dbReference type="UniPathway" id="UPA00659"/>
<dbReference type="EvolutionaryTrace" id="O70351"/>
<dbReference type="PRO" id="PR:O70351"/>
<dbReference type="Proteomes" id="UP000002494">
    <property type="component" value="Unplaced"/>
</dbReference>
<dbReference type="GO" id="GO:0005783">
    <property type="term" value="C:endoplasmic reticulum"/>
    <property type="evidence" value="ECO:0000266"/>
    <property type="project" value="RGD"/>
</dbReference>
<dbReference type="GO" id="GO:0042645">
    <property type="term" value="C:mitochondrial nucleoid"/>
    <property type="evidence" value="ECO:0000250"/>
    <property type="project" value="UniProtKB"/>
</dbReference>
<dbReference type="GO" id="GO:0030678">
    <property type="term" value="C:mitochondrial ribonuclease P complex"/>
    <property type="evidence" value="ECO:0000250"/>
    <property type="project" value="UniProtKB"/>
</dbReference>
<dbReference type="GO" id="GO:0005739">
    <property type="term" value="C:mitochondrion"/>
    <property type="evidence" value="ECO:0000250"/>
    <property type="project" value="UniProtKB"/>
</dbReference>
<dbReference type="GO" id="GO:0043527">
    <property type="term" value="C:tRNA methyltransferase complex"/>
    <property type="evidence" value="ECO:0000266"/>
    <property type="project" value="RGD"/>
</dbReference>
<dbReference type="GO" id="GO:0044594">
    <property type="term" value="F:17-beta-hydroxysteroid dehydrogenase (NAD+) activity"/>
    <property type="evidence" value="ECO:0000250"/>
    <property type="project" value="UniProtKB"/>
</dbReference>
<dbReference type="GO" id="GO:0047015">
    <property type="term" value="F:3-hydroxy-2-methylbutyryl-CoA dehydrogenase activity"/>
    <property type="evidence" value="ECO:0000250"/>
    <property type="project" value="UniProtKB"/>
</dbReference>
<dbReference type="GO" id="GO:0003857">
    <property type="term" value="F:3-hydroxyacyl-CoA dehydrogenase activity"/>
    <property type="evidence" value="ECO:0000250"/>
    <property type="project" value="UniProtKB"/>
</dbReference>
<dbReference type="GO" id="GO:0018454">
    <property type="term" value="F:acetoacetyl-CoA reductase activity"/>
    <property type="evidence" value="ECO:0000314"/>
    <property type="project" value="RGD"/>
</dbReference>
<dbReference type="GO" id="GO:0001540">
    <property type="term" value="F:amyloid-beta binding"/>
    <property type="evidence" value="ECO:0000314"/>
    <property type="project" value="RGD"/>
</dbReference>
<dbReference type="GO" id="GO:0047044">
    <property type="term" value="F:androstan-3-alpha,17-beta-diol dehydrogenase (NAD+) activity"/>
    <property type="evidence" value="ECO:0007669"/>
    <property type="project" value="UniProtKB-EC"/>
</dbReference>
<dbReference type="GO" id="GO:0106281">
    <property type="term" value="F:chenodeoxycholate 7-alpha-dehydrogenase (NAD+) activity"/>
    <property type="evidence" value="ECO:0000250"/>
    <property type="project" value="UniProtKB"/>
</dbReference>
<dbReference type="GO" id="GO:0008709">
    <property type="term" value="F:cholate 7-alpha-dehydrogenase (NAD+) activity"/>
    <property type="evidence" value="ECO:0000250"/>
    <property type="project" value="UniProtKB"/>
</dbReference>
<dbReference type="GO" id="GO:0004303">
    <property type="term" value="F:estradiol 17-beta-dehydrogenase [NAD(P)+] activity"/>
    <property type="evidence" value="ECO:0000314"/>
    <property type="project" value="RGD"/>
</dbReference>
<dbReference type="GO" id="GO:0042802">
    <property type="term" value="F:identical protein binding"/>
    <property type="evidence" value="ECO:0000353"/>
    <property type="project" value="RGD"/>
</dbReference>
<dbReference type="GO" id="GO:0106282">
    <property type="term" value="F:isoursodeoxycholate 7-beta-dehydrogenase (NAD+) activity"/>
    <property type="evidence" value="ECO:0000250"/>
    <property type="project" value="UniProtKB"/>
</dbReference>
<dbReference type="GO" id="GO:0051287">
    <property type="term" value="F:NAD binding"/>
    <property type="evidence" value="ECO:0000314"/>
    <property type="project" value="RGD"/>
</dbReference>
<dbReference type="GO" id="GO:0030331">
    <property type="term" value="F:nuclear estrogen receptor binding"/>
    <property type="evidence" value="ECO:0000353"/>
    <property type="project" value="RGD"/>
</dbReference>
<dbReference type="GO" id="GO:0005496">
    <property type="term" value="F:steroid binding"/>
    <property type="evidence" value="ECO:0000314"/>
    <property type="project" value="RGD"/>
</dbReference>
<dbReference type="GO" id="GO:0047035">
    <property type="term" value="F:testosterone dehydrogenase (NAD+) activity"/>
    <property type="evidence" value="ECO:0000250"/>
    <property type="project" value="UniProtKB"/>
</dbReference>
<dbReference type="GO" id="GO:0030283">
    <property type="term" value="F:testosterone dehydrogenase [NAD(P)+] activity"/>
    <property type="evidence" value="ECO:0000250"/>
    <property type="project" value="UniProtKB"/>
</dbReference>
<dbReference type="GO" id="GO:0000049">
    <property type="term" value="F:tRNA binding"/>
    <property type="evidence" value="ECO:0000250"/>
    <property type="project" value="UniProtKB"/>
</dbReference>
<dbReference type="GO" id="GO:0106283">
    <property type="term" value="F:ursodeoxycholate 7-beta-dehydrogenase (NAD+) activity"/>
    <property type="evidence" value="ECO:0000250"/>
    <property type="project" value="UniProtKB"/>
</dbReference>
<dbReference type="GO" id="GO:0008209">
    <property type="term" value="P:androgen metabolic process"/>
    <property type="evidence" value="ECO:0000250"/>
    <property type="project" value="UniProtKB"/>
</dbReference>
<dbReference type="GO" id="GO:0006699">
    <property type="term" value="P:bile acid biosynthetic process"/>
    <property type="evidence" value="ECO:0000250"/>
    <property type="project" value="UniProtKB"/>
</dbReference>
<dbReference type="GO" id="GO:0062173">
    <property type="term" value="P:brexanolone metabolic process"/>
    <property type="evidence" value="ECO:0000250"/>
    <property type="project" value="UniProtKB"/>
</dbReference>
<dbReference type="GO" id="GO:0008207">
    <property type="term" value="P:C21-steroid hormone metabolic process"/>
    <property type="evidence" value="ECO:0000250"/>
    <property type="project" value="UniProtKB"/>
</dbReference>
<dbReference type="GO" id="GO:0008210">
    <property type="term" value="P:estrogen metabolic process"/>
    <property type="evidence" value="ECO:0000250"/>
    <property type="project" value="UniProtKB"/>
</dbReference>
<dbReference type="GO" id="GO:0006635">
    <property type="term" value="P:fatty acid beta-oxidation"/>
    <property type="evidence" value="ECO:0000250"/>
    <property type="project" value="UniProtKB"/>
</dbReference>
<dbReference type="GO" id="GO:0006631">
    <property type="term" value="P:fatty acid metabolic process"/>
    <property type="evidence" value="ECO:0000318"/>
    <property type="project" value="GO_Central"/>
</dbReference>
<dbReference type="GO" id="GO:0006550">
    <property type="term" value="P:isoleucine catabolic process"/>
    <property type="evidence" value="ECO:0000250"/>
    <property type="project" value="UniProtKB"/>
</dbReference>
<dbReference type="GO" id="GO:0033327">
    <property type="term" value="P:Leydig cell differentiation"/>
    <property type="evidence" value="ECO:0000270"/>
    <property type="project" value="RGD"/>
</dbReference>
<dbReference type="GO" id="GO:0008584">
    <property type="term" value="P:male gonad development"/>
    <property type="evidence" value="ECO:0000270"/>
    <property type="project" value="RGD"/>
</dbReference>
<dbReference type="GO" id="GO:1990180">
    <property type="term" value="P:mitochondrial tRNA 3'-end processing"/>
    <property type="evidence" value="ECO:0000250"/>
    <property type="project" value="UniProtKB"/>
</dbReference>
<dbReference type="GO" id="GO:0097745">
    <property type="term" value="P:mitochondrial tRNA 5'-end processing"/>
    <property type="evidence" value="ECO:0000250"/>
    <property type="project" value="UniProtKB"/>
</dbReference>
<dbReference type="GO" id="GO:0070901">
    <property type="term" value="P:mitochondrial tRNA methylation"/>
    <property type="evidence" value="ECO:0000250"/>
    <property type="project" value="UniProtKB"/>
</dbReference>
<dbReference type="GO" id="GO:0007005">
    <property type="term" value="P:mitochondrion organization"/>
    <property type="evidence" value="ECO:0000266"/>
    <property type="project" value="RGD"/>
</dbReference>
<dbReference type="GO" id="GO:0051289">
    <property type="term" value="P:protein homotetramerization"/>
    <property type="evidence" value="ECO:0000266"/>
    <property type="project" value="RGD"/>
</dbReference>
<dbReference type="CDD" id="cd05371">
    <property type="entry name" value="HSD10-like_SDR_c"/>
    <property type="match status" value="1"/>
</dbReference>
<dbReference type="FunFam" id="3.40.50.720:FF:000215">
    <property type="entry name" value="3-hydroxyacyl-CoA dehydrogenase type-2"/>
    <property type="match status" value="1"/>
</dbReference>
<dbReference type="Gene3D" id="3.40.50.720">
    <property type="entry name" value="NAD(P)-binding Rossmann-like Domain"/>
    <property type="match status" value="1"/>
</dbReference>
<dbReference type="InterPro" id="IPR036291">
    <property type="entry name" value="NAD(P)-bd_dom_sf"/>
</dbReference>
<dbReference type="InterPro" id="IPR020904">
    <property type="entry name" value="Sc_DH/Rdtase_CS"/>
</dbReference>
<dbReference type="InterPro" id="IPR002347">
    <property type="entry name" value="SDR_fam"/>
</dbReference>
<dbReference type="PANTHER" id="PTHR43658:SF8">
    <property type="entry name" value="17-BETA-HYDROXYSTEROID DEHYDROGENASE 14-RELATED"/>
    <property type="match status" value="1"/>
</dbReference>
<dbReference type="PANTHER" id="PTHR43658">
    <property type="entry name" value="SHORT-CHAIN DEHYDROGENASE/REDUCTASE"/>
    <property type="match status" value="1"/>
</dbReference>
<dbReference type="Pfam" id="PF00106">
    <property type="entry name" value="adh_short"/>
    <property type="match status" value="1"/>
</dbReference>
<dbReference type="PRINTS" id="PR00081">
    <property type="entry name" value="GDHRDH"/>
</dbReference>
<dbReference type="PRINTS" id="PR00080">
    <property type="entry name" value="SDRFAMILY"/>
</dbReference>
<dbReference type="SUPFAM" id="SSF51735">
    <property type="entry name" value="NAD(P)-binding Rossmann-fold domains"/>
    <property type="match status" value="1"/>
</dbReference>
<dbReference type="PROSITE" id="PS00061">
    <property type="entry name" value="ADH_SHORT"/>
    <property type="match status" value="1"/>
</dbReference>
<protein>
    <recommendedName>
        <fullName>3-hydroxyacyl-CoA dehydrogenase type-2</fullName>
        <ecNumber evidence="2">1.1.1.35</ecNumber>
    </recommendedName>
    <alternativeName>
        <fullName>17-beta-estradiol 17-dehydrogenase</fullName>
        <ecNumber evidence="2">1.1.1.62</ecNumber>
    </alternativeName>
    <alternativeName>
        <fullName>2-methyl-3-hydroxybutyryl-CoA dehydrogenase</fullName>
        <shortName>MHBD</shortName>
    </alternativeName>
    <alternativeName>
        <fullName>3-alpha-(17-beta)-hydroxysteroid dehydrogenase (NAD(+))</fullName>
        <ecNumber evidence="2">1.1.1.239</ecNumber>
    </alternativeName>
    <alternativeName>
        <fullName>3-hydroxy-2-methylbutyryl-CoA dehydrogenase</fullName>
        <ecNumber evidence="2">1.1.1.178</ecNumber>
    </alternativeName>
    <alternativeName>
        <fullName>3-hydroxyacyl-CoA dehydrogenase type II</fullName>
    </alternativeName>
    <alternativeName>
        <fullName>3alpha(or 20beta)-hydroxysteroid dehydrogenase</fullName>
        <ecNumber evidence="2">1.1.1.53</ecNumber>
    </alternativeName>
    <alternativeName>
        <fullName>7-alpha-hydroxysteroid dehydrogenase</fullName>
        <ecNumber evidence="2">1.1.1.159</ecNumber>
    </alternativeName>
    <alternativeName>
        <fullName>Endoplasmic reticulum-associated amyloid beta-peptide-binding protein</fullName>
    </alternativeName>
    <alternativeName>
        <fullName>Mitochondrial ribonuclease P protein 2</fullName>
        <shortName>Mitochondrial RNase P protein 2</shortName>
    </alternativeName>
    <alternativeName>
        <fullName>Short chain dehydrogenase/reductase family 5C member 1</fullName>
    </alternativeName>
    <alternativeName>
        <fullName>Short-chain type dehydrogenase/reductase XH98G2</fullName>
    </alternativeName>
    <alternativeName>
        <fullName>Type II HADH</fullName>
    </alternativeName>
</protein>
<reference key="1">
    <citation type="submission" date="1998-02" db="EMBL/GenBank/DDBJ databases">
        <title>Rattus norvegicus amyloid beta-peptide binding protein (ERAB) mRNA.</title>
        <authorList>
            <person name="Gunn-Moore F.J."/>
            <person name="Tavare J.M."/>
        </authorList>
    </citation>
    <scope>NUCLEOTIDE SEQUENCE [MRNA]</scope>
    <source>
        <tissue>Liver</tissue>
    </source>
</reference>
<reference key="2">
    <citation type="submission" date="1998-06" db="EMBL/GenBank/DDBJ databases">
        <title>Molecular cloning and characterization of the cDNA of rat brain short chain L-3-hydroxyacyl-CoA dehydrogenase.</title>
        <authorList>
            <person name="Yang S.-Y."/>
            <person name="He X.-Y."/>
        </authorList>
    </citation>
    <scope>NUCLEOTIDE SEQUENCE [MRNA]</scope>
    <source>
        <strain>Sprague-Dawley</strain>
        <tissue>Brain</tissue>
    </source>
</reference>
<reference key="3">
    <citation type="submission" date="2009-01" db="UniProtKB">
        <authorList>
            <person name="Lubec G."/>
            <person name="Chen W.-Q."/>
        </authorList>
    </citation>
    <scope>PROTEIN SEQUENCE OF 117-130 AND 193-212</scope>
    <scope>IDENTIFICATION BY MASS SPECTROMETRY</scope>
    <source>
        <strain>Sprague-Dawley</strain>
        <tissue>Hippocampus</tissue>
    </source>
</reference>
<reference key="4">
    <citation type="journal article" date="2000" name="J. Mol. Biol.">
        <title>Recognition of structurally diverse substrates by type II 3-hydroxyacyl-CoA dehydrogenase (HADH II)/amyloid-beta binding alcohol dehydrogenase (ABAD).</title>
        <authorList>
            <person name="Powell A.J."/>
            <person name="Read J.A."/>
            <person name="Banfield M.J."/>
            <person name="Gunn-Moore F."/>
            <person name="Yan S.D."/>
            <person name="Lustbader J."/>
            <person name="Stern A.R."/>
            <person name="Stern D.M."/>
            <person name="Brady R.L."/>
        </authorList>
    </citation>
    <scope>X-RAY CRYSTALLOGRAPHY (2.0 ANGSTROMS) IN COMPLEX WITH NAD AND SUBSTRATE</scope>
    <source>
        <tissue>Brain</tissue>
    </source>
</reference>
<accession>O70351</accession>
<accession>Q9QYD4</accession>
<sequence length="261" mass="27246">MAAAVRSVKGLVAVITGGASGLGLSTAKRLVGQGATAVLLDVPNSEGETEAKKLGGNCIFAPANVTSEKEVQAALTLAKEKFGRIDVAVNCAGIAVAIKTYHEKKNQVHTLEDFQRVINVNLIGTFNVIRLVAGVMGQNEPDQGGQRGVIINTASVAAFEGQVGQAAYSASKGGIVGMTLPIARDLAPIGIRVVTIAPGLFATPLLTTLPDKVRNFLASQVPFPSRLGDPAEYAHLVQMVIENPFLNGEVIRLDGAIRMQP</sequence>
<proteinExistence type="evidence at protein level"/>
<evidence type="ECO:0000250" key="1">
    <source>
        <dbReference type="UniProtKB" id="O08756"/>
    </source>
</evidence>
<evidence type="ECO:0000250" key="2">
    <source>
        <dbReference type="UniProtKB" id="Q99714"/>
    </source>
</evidence>
<evidence type="ECO:0000269" key="3">
    <source>
    </source>
</evidence>
<evidence type="ECO:0000305" key="4"/>
<evidence type="ECO:0007829" key="5">
    <source>
        <dbReference type="PDB" id="1E6W"/>
    </source>
</evidence>
<organism>
    <name type="scientific">Rattus norvegicus</name>
    <name type="common">Rat</name>
    <dbReference type="NCBI Taxonomy" id="10116"/>
    <lineage>
        <taxon>Eukaryota</taxon>
        <taxon>Metazoa</taxon>
        <taxon>Chordata</taxon>
        <taxon>Craniata</taxon>
        <taxon>Vertebrata</taxon>
        <taxon>Euteleostomi</taxon>
        <taxon>Mammalia</taxon>
        <taxon>Eutheria</taxon>
        <taxon>Euarchontoglires</taxon>
        <taxon>Glires</taxon>
        <taxon>Rodentia</taxon>
        <taxon>Myomorpha</taxon>
        <taxon>Muroidea</taxon>
        <taxon>Muridae</taxon>
        <taxon>Murinae</taxon>
        <taxon>Rattus</taxon>
    </lineage>
</organism>
<name>HCD2_RAT</name>
<keyword id="KW-0002">3D-structure</keyword>
<keyword id="KW-0007">Acetylation</keyword>
<keyword id="KW-0903">Direct protein sequencing</keyword>
<keyword id="KW-0276">Fatty acid metabolism</keyword>
<keyword id="KW-0443">Lipid metabolism</keyword>
<keyword id="KW-0496">Mitochondrion</keyword>
<keyword id="KW-1135">Mitochondrion nucleoid</keyword>
<keyword id="KW-0520">NAD</keyword>
<keyword id="KW-0560">Oxidoreductase</keyword>
<keyword id="KW-1185">Reference proteome</keyword>
<keyword id="KW-0753">Steroid metabolism</keyword>
<keyword id="KW-0819">tRNA processing</keyword>